<feature type="chain" id="PRO_1000007846" description="4-diphosphocytidyl-2-C-methyl-D-erythritol kinase">
    <location>
        <begin position="1"/>
        <end position="275"/>
    </location>
</feature>
<feature type="active site" evidence="1">
    <location>
        <position position="14"/>
    </location>
</feature>
<feature type="active site" evidence="1">
    <location>
        <position position="140"/>
    </location>
</feature>
<feature type="binding site" evidence="1">
    <location>
        <begin position="98"/>
        <end position="108"/>
    </location>
    <ligand>
        <name>ATP</name>
        <dbReference type="ChEBI" id="CHEBI:30616"/>
    </ligand>
</feature>
<evidence type="ECO:0000255" key="1">
    <source>
        <dbReference type="HAMAP-Rule" id="MF_00061"/>
    </source>
</evidence>
<gene>
    <name evidence="1" type="primary">ispE</name>
    <name type="ordered locus">FTF0271</name>
</gene>
<comment type="function">
    <text evidence="1">Catalyzes the phosphorylation of the position 2 hydroxy group of 4-diphosphocytidyl-2C-methyl-D-erythritol.</text>
</comment>
<comment type="catalytic activity">
    <reaction evidence="1">
        <text>4-CDP-2-C-methyl-D-erythritol + ATP = 4-CDP-2-C-methyl-D-erythritol 2-phosphate + ADP + H(+)</text>
        <dbReference type="Rhea" id="RHEA:18437"/>
        <dbReference type="ChEBI" id="CHEBI:15378"/>
        <dbReference type="ChEBI" id="CHEBI:30616"/>
        <dbReference type="ChEBI" id="CHEBI:57823"/>
        <dbReference type="ChEBI" id="CHEBI:57919"/>
        <dbReference type="ChEBI" id="CHEBI:456216"/>
        <dbReference type="EC" id="2.7.1.148"/>
    </reaction>
</comment>
<comment type="pathway">
    <text evidence="1">Isoprenoid biosynthesis; isopentenyl diphosphate biosynthesis via DXP pathway; isopentenyl diphosphate from 1-deoxy-D-xylulose 5-phosphate: step 3/6.</text>
</comment>
<comment type="similarity">
    <text evidence="1">Belongs to the GHMP kinase family. IspE subfamily.</text>
</comment>
<dbReference type="EC" id="2.7.1.148" evidence="1"/>
<dbReference type="EMBL" id="AM286280">
    <property type="protein sequence ID" value="CAL08287.1"/>
    <property type="molecule type" value="Genomic_DNA"/>
</dbReference>
<dbReference type="RefSeq" id="WP_003021712.1">
    <property type="nucleotide sequence ID" value="NC_008245.1"/>
</dbReference>
<dbReference type="SMR" id="Q14JH1"/>
<dbReference type="KEGG" id="ftf:FTF0271"/>
<dbReference type="HOGENOM" id="CLU_053057_3_0_6"/>
<dbReference type="UniPathway" id="UPA00056">
    <property type="reaction ID" value="UER00094"/>
</dbReference>
<dbReference type="GO" id="GO:0050515">
    <property type="term" value="F:4-(cytidine 5'-diphospho)-2-C-methyl-D-erythritol kinase activity"/>
    <property type="evidence" value="ECO:0007669"/>
    <property type="project" value="UniProtKB-UniRule"/>
</dbReference>
<dbReference type="GO" id="GO:0005524">
    <property type="term" value="F:ATP binding"/>
    <property type="evidence" value="ECO:0007669"/>
    <property type="project" value="UniProtKB-UniRule"/>
</dbReference>
<dbReference type="GO" id="GO:0019288">
    <property type="term" value="P:isopentenyl diphosphate biosynthetic process, methylerythritol 4-phosphate pathway"/>
    <property type="evidence" value="ECO:0007669"/>
    <property type="project" value="UniProtKB-UniRule"/>
</dbReference>
<dbReference type="GO" id="GO:0016114">
    <property type="term" value="P:terpenoid biosynthetic process"/>
    <property type="evidence" value="ECO:0007669"/>
    <property type="project" value="InterPro"/>
</dbReference>
<dbReference type="Gene3D" id="3.30.230.10">
    <property type="match status" value="1"/>
</dbReference>
<dbReference type="Gene3D" id="3.30.70.890">
    <property type="entry name" value="GHMP kinase, C-terminal domain"/>
    <property type="match status" value="1"/>
</dbReference>
<dbReference type="HAMAP" id="MF_00061">
    <property type="entry name" value="IspE"/>
    <property type="match status" value="1"/>
</dbReference>
<dbReference type="InterPro" id="IPR013750">
    <property type="entry name" value="GHMP_kinase_C_dom"/>
</dbReference>
<dbReference type="InterPro" id="IPR036554">
    <property type="entry name" value="GHMP_kinase_C_sf"/>
</dbReference>
<dbReference type="InterPro" id="IPR006204">
    <property type="entry name" value="GHMP_kinase_N_dom"/>
</dbReference>
<dbReference type="InterPro" id="IPR004424">
    <property type="entry name" value="IspE"/>
</dbReference>
<dbReference type="InterPro" id="IPR020568">
    <property type="entry name" value="Ribosomal_Su5_D2-typ_SF"/>
</dbReference>
<dbReference type="InterPro" id="IPR014721">
    <property type="entry name" value="Ribsml_uS5_D2-typ_fold_subgr"/>
</dbReference>
<dbReference type="NCBIfam" id="TIGR00154">
    <property type="entry name" value="ispE"/>
    <property type="match status" value="1"/>
</dbReference>
<dbReference type="PANTHER" id="PTHR43527">
    <property type="entry name" value="4-DIPHOSPHOCYTIDYL-2-C-METHYL-D-ERYTHRITOL KINASE, CHLOROPLASTIC"/>
    <property type="match status" value="1"/>
</dbReference>
<dbReference type="PANTHER" id="PTHR43527:SF2">
    <property type="entry name" value="4-DIPHOSPHOCYTIDYL-2-C-METHYL-D-ERYTHRITOL KINASE, CHLOROPLASTIC"/>
    <property type="match status" value="1"/>
</dbReference>
<dbReference type="Pfam" id="PF08544">
    <property type="entry name" value="GHMP_kinases_C"/>
    <property type="match status" value="1"/>
</dbReference>
<dbReference type="Pfam" id="PF00288">
    <property type="entry name" value="GHMP_kinases_N"/>
    <property type="match status" value="1"/>
</dbReference>
<dbReference type="PIRSF" id="PIRSF010376">
    <property type="entry name" value="IspE"/>
    <property type="match status" value="1"/>
</dbReference>
<dbReference type="SUPFAM" id="SSF55060">
    <property type="entry name" value="GHMP Kinase, C-terminal domain"/>
    <property type="match status" value="1"/>
</dbReference>
<dbReference type="SUPFAM" id="SSF54211">
    <property type="entry name" value="Ribosomal protein S5 domain 2-like"/>
    <property type="match status" value="1"/>
</dbReference>
<organism>
    <name type="scientific">Francisella tularensis subsp. tularensis (strain FSC 198)</name>
    <dbReference type="NCBI Taxonomy" id="393115"/>
    <lineage>
        <taxon>Bacteria</taxon>
        <taxon>Pseudomonadati</taxon>
        <taxon>Pseudomonadota</taxon>
        <taxon>Gammaproteobacteria</taxon>
        <taxon>Thiotrichales</taxon>
        <taxon>Francisellaceae</taxon>
        <taxon>Francisella</taxon>
    </lineage>
</organism>
<keyword id="KW-0067">ATP-binding</keyword>
<keyword id="KW-0414">Isoprene biosynthesis</keyword>
<keyword id="KW-0418">Kinase</keyword>
<keyword id="KW-0547">Nucleotide-binding</keyword>
<keyword id="KW-0808">Transferase</keyword>
<name>ISPE_FRAT1</name>
<protein>
    <recommendedName>
        <fullName evidence="1">4-diphosphocytidyl-2-C-methyl-D-erythritol kinase</fullName>
        <shortName evidence="1">CMK</shortName>
        <ecNumber evidence="1">2.7.1.148</ecNumber>
    </recommendedName>
    <alternativeName>
        <fullName evidence="1">4-(cytidine-5'-diphospho)-2-C-methyl-D-erythritol kinase</fullName>
    </alternativeName>
</protein>
<accession>Q14JH1</accession>
<proteinExistence type="inferred from homology"/>
<sequence length="275" mass="31471">MANIKAKKYYSYAKINLFLHILNKRPDGYHNLQTWFTFLDLKDQLTFSFNNSREINISSNISIAAKQDNLVYKAIKKFQQSYRVQDIGVDIEIKKNIPMGAGLGGGSSNAATTLIALRDYYLPQLSNEEMIPLAAKLGADVPIFVYGKSAWAEGIGEILYHKDFSPQYALLIKPDIHISTKEFFTSEDLIKSSVLISKDLGFDKSIMHNDFENVFYAKYPEFSQYLKELDSDFRMTGTGSCFYLLSADKNKLEQLARKINKPLDKWLVKTLNYVY</sequence>
<reference key="1">
    <citation type="journal article" date="2007" name="PLoS ONE">
        <title>Genome sequencing shows that European isolates of Francisella tularensis subspecies tularensis are almost identical to US laboratory strain Schu S4.</title>
        <authorList>
            <person name="Chaudhuri R.R."/>
            <person name="Ren C.-P."/>
            <person name="Desmond L."/>
            <person name="Vincent G.A."/>
            <person name="Silman N.J."/>
            <person name="Brehm J.K."/>
            <person name="Elmore M.J."/>
            <person name="Hudson M.J."/>
            <person name="Forsman M."/>
            <person name="Isherwood K.E."/>
            <person name="Gurycova D."/>
            <person name="Minton N.P."/>
            <person name="Titball R.W."/>
            <person name="Pallen M.J."/>
            <person name="Vipond R."/>
        </authorList>
    </citation>
    <scope>NUCLEOTIDE SEQUENCE [LARGE SCALE GENOMIC DNA]</scope>
    <source>
        <strain>FSC 198</strain>
    </source>
</reference>